<feature type="chain" id="PRO_1000055479" description="Large ribosomal subunit protein uL13">
    <location>
        <begin position="1"/>
        <end position="141"/>
    </location>
</feature>
<name>RL13_SULNB</name>
<organism>
    <name type="scientific">Sulfurovum sp. (strain NBC37-1)</name>
    <dbReference type="NCBI Taxonomy" id="387093"/>
    <lineage>
        <taxon>Bacteria</taxon>
        <taxon>Pseudomonadati</taxon>
        <taxon>Campylobacterota</taxon>
        <taxon>Epsilonproteobacteria</taxon>
        <taxon>Campylobacterales</taxon>
        <taxon>Sulfurovaceae</taxon>
        <taxon>Sulfurovum</taxon>
    </lineage>
</organism>
<comment type="function">
    <text evidence="1">This protein is one of the early assembly proteins of the 50S ribosomal subunit, although it is not seen to bind rRNA by itself. It is important during the early stages of 50S assembly.</text>
</comment>
<comment type="subunit">
    <text evidence="1">Part of the 50S ribosomal subunit.</text>
</comment>
<comment type="similarity">
    <text evidence="1">Belongs to the universal ribosomal protein uL13 family.</text>
</comment>
<reference key="1">
    <citation type="journal article" date="2007" name="Proc. Natl. Acad. Sci. U.S.A.">
        <title>Deep-sea vent epsilon-proteobacterial genomes provide insights into emergence of pathogens.</title>
        <authorList>
            <person name="Nakagawa S."/>
            <person name="Takaki Y."/>
            <person name="Shimamura S."/>
            <person name="Reysenbach A.-L."/>
            <person name="Takai K."/>
            <person name="Horikoshi K."/>
        </authorList>
    </citation>
    <scope>NUCLEOTIDE SEQUENCE [LARGE SCALE GENOMIC DNA]</scope>
    <source>
        <strain>NBC37-1</strain>
    </source>
</reference>
<sequence>MKMTKVLKPSEVQRDWVLIDAEGKTFGRILTEVATLLRGKHKPSFTPNVDCGDYVVIINAEKAKFTGVKLEDKEYFTHSGYFGSTKSKKLGDMLENHTEKLYKLAVRGMLPKTTLGRQMLKKLKVYAGAEHPHTAQINKEA</sequence>
<protein>
    <recommendedName>
        <fullName evidence="1">Large ribosomal subunit protein uL13</fullName>
    </recommendedName>
    <alternativeName>
        <fullName evidence="2">50S ribosomal protein L13</fullName>
    </alternativeName>
</protein>
<gene>
    <name evidence="1" type="primary">rplM</name>
    <name type="ordered locus">SUN_0188</name>
</gene>
<accession>A6Q6N9</accession>
<proteinExistence type="inferred from homology"/>
<evidence type="ECO:0000255" key="1">
    <source>
        <dbReference type="HAMAP-Rule" id="MF_01366"/>
    </source>
</evidence>
<evidence type="ECO:0000305" key="2"/>
<dbReference type="EMBL" id="AP009179">
    <property type="protein sequence ID" value="BAF71148.1"/>
    <property type="molecule type" value="Genomic_DNA"/>
</dbReference>
<dbReference type="SMR" id="A6Q6N9"/>
<dbReference type="STRING" id="387093.SUN_0188"/>
<dbReference type="KEGG" id="sun:SUN_0188"/>
<dbReference type="eggNOG" id="COG0102">
    <property type="taxonomic scope" value="Bacteria"/>
</dbReference>
<dbReference type="HOGENOM" id="CLU_082184_2_2_7"/>
<dbReference type="Proteomes" id="UP000006378">
    <property type="component" value="Chromosome"/>
</dbReference>
<dbReference type="GO" id="GO:0022625">
    <property type="term" value="C:cytosolic large ribosomal subunit"/>
    <property type="evidence" value="ECO:0007669"/>
    <property type="project" value="TreeGrafter"/>
</dbReference>
<dbReference type="GO" id="GO:0003729">
    <property type="term" value="F:mRNA binding"/>
    <property type="evidence" value="ECO:0007669"/>
    <property type="project" value="TreeGrafter"/>
</dbReference>
<dbReference type="GO" id="GO:0003735">
    <property type="term" value="F:structural constituent of ribosome"/>
    <property type="evidence" value="ECO:0007669"/>
    <property type="project" value="InterPro"/>
</dbReference>
<dbReference type="GO" id="GO:0017148">
    <property type="term" value="P:negative regulation of translation"/>
    <property type="evidence" value="ECO:0007669"/>
    <property type="project" value="TreeGrafter"/>
</dbReference>
<dbReference type="GO" id="GO:0006412">
    <property type="term" value="P:translation"/>
    <property type="evidence" value="ECO:0007669"/>
    <property type="project" value="UniProtKB-UniRule"/>
</dbReference>
<dbReference type="CDD" id="cd00392">
    <property type="entry name" value="Ribosomal_L13"/>
    <property type="match status" value="1"/>
</dbReference>
<dbReference type="Gene3D" id="3.90.1180.10">
    <property type="entry name" value="Ribosomal protein L13"/>
    <property type="match status" value="1"/>
</dbReference>
<dbReference type="HAMAP" id="MF_01366">
    <property type="entry name" value="Ribosomal_uL13"/>
    <property type="match status" value="1"/>
</dbReference>
<dbReference type="InterPro" id="IPR005822">
    <property type="entry name" value="Ribosomal_uL13"/>
</dbReference>
<dbReference type="InterPro" id="IPR005823">
    <property type="entry name" value="Ribosomal_uL13_bac-type"/>
</dbReference>
<dbReference type="InterPro" id="IPR023563">
    <property type="entry name" value="Ribosomal_uL13_CS"/>
</dbReference>
<dbReference type="InterPro" id="IPR036899">
    <property type="entry name" value="Ribosomal_uL13_sf"/>
</dbReference>
<dbReference type="NCBIfam" id="TIGR01066">
    <property type="entry name" value="rplM_bact"/>
    <property type="match status" value="1"/>
</dbReference>
<dbReference type="PANTHER" id="PTHR11545:SF2">
    <property type="entry name" value="LARGE RIBOSOMAL SUBUNIT PROTEIN UL13M"/>
    <property type="match status" value="1"/>
</dbReference>
<dbReference type="PANTHER" id="PTHR11545">
    <property type="entry name" value="RIBOSOMAL PROTEIN L13"/>
    <property type="match status" value="1"/>
</dbReference>
<dbReference type="Pfam" id="PF00572">
    <property type="entry name" value="Ribosomal_L13"/>
    <property type="match status" value="1"/>
</dbReference>
<dbReference type="PIRSF" id="PIRSF002181">
    <property type="entry name" value="Ribosomal_L13"/>
    <property type="match status" value="1"/>
</dbReference>
<dbReference type="SUPFAM" id="SSF52161">
    <property type="entry name" value="Ribosomal protein L13"/>
    <property type="match status" value="1"/>
</dbReference>
<dbReference type="PROSITE" id="PS00783">
    <property type="entry name" value="RIBOSOMAL_L13"/>
    <property type="match status" value="1"/>
</dbReference>
<keyword id="KW-0687">Ribonucleoprotein</keyword>
<keyword id="KW-0689">Ribosomal protein</keyword>